<keyword id="KW-0066">ATP synthesis</keyword>
<keyword id="KW-1003">Cell membrane</keyword>
<keyword id="KW-0139">CF(1)</keyword>
<keyword id="KW-0375">Hydrogen ion transport</keyword>
<keyword id="KW-0406">Ion transport</keyword>
<keyword id="KW-0472">Membrane</keyword>
<keyword id="KW-0813">Transport</keyword>
<evidence type="ECO:0000255" key="1">
    <source>
        <dbReference type="HAMAP-Rule" id="MF_00815"/>
    </source>
</evidence>
<gene>
    <name evidence="1" type="primary">atpG</name>
</gene>
<comment type="function">
    <text evidence="1">Produces ATP from ADP in the presence of a proton gradient across the membrane. The gamma chain is believed to be important in regulating ATPase activity and the flow of protons through the CF(0) complex.</text>
</comment>
<comment type="subunit">
    <text evidence="1">F-type ATPases have 2 components, CF(1) - the catalytic core - and CF(0) - the membrane proton channel. CF(1) has five subunits: alpha(3), beta(3), gamma(1), delta(1), epsilon(1). CF(0) has three main subunits: a, b and c.</text>
</comment>
<comment type="subcellular location">
    <subcellularLocation>
        <location evidence="1">Cell membrane</location>
        <topology evidence="1">Peripheral membrane protein</topology>
    </subcellularLocation>
</comment>
<comment type="similarity">
    <text evidence="1">Belongs to the ATPase gamma chain family.</text>
</comment>
<proteinExistence type="inferred from homology"/>
<feature type="chain" id="PRO_0000073255" description="ATP synthase gamma chain">
    <location>
        <begin position="1"/>
        <end position="289"/>
    </location>
</feature>
<name>ATPG_BUCMH</name>
<accession>Q9RQ74</accession>
<reference key="1">
    <citation type="journal article" date="1999" name="Mol. Biol. Evol.">
        <title>Sequence evolution in bacterial endosymbionts having extreme base compositions.</title>
        <authorList>
            <person name="Clark M.A."/>
            <person name="Moran N.A."/>
            <person name="Baumann P."/>
        </authorList>
    </citation>
    <scope>NUCLEOTIDE SEQUENCE [GENOMIC DNA]</scope>
</reference>
<dbReference type="EMBL" id="AF129404">
    <property type="protein sequence ID" value="AAF13784.1"/>
    <property type="molecule type" value="Genomic_DNA"/>
</dbReference>
<dbReference type="RefSeq" id="WP_158336232.1">
    <property type="nucleotide sequence ID" value="NZ_CP033004.1"/>
</dbReference>
<dbReference type="SMR" id="Q9RQ74"/>
<dbReference type="OrthoDB" id="9812769at2"/>
<dbReference type="GO" id="GO:0005886">
    <property type="term" value="C:plasma membrane"/>
    <property type="evidence" value="ECO:0007669"/>
    <property type="project" value="UniProtKB-SubCell"/>
</dbReference>
<dbReference type="GO" id="GO:0045259">
    <property type="term" value="C:proton-transporting ATP synthase complex"/>
    <property type="evidence" value="ECO:0007669"/>
    <property type="project" value="UniProtKB-KW"/>
</dbReference>
<dbReference type="GO" id="GO:0005524">
    <property type="term" value="F:ATP binding"/>
    <property type="evidence" value="ECO:0007669"/>
    <property type="project" value="UniProtKB-UniRule"/>
</dbReference>
<dbReference type="GO" id="GO:0046933">
    <property type="term" value="F:proton-transporting ATP synthase activity, rotational mechanism"/>
    <property type="evidence" value="ECO:0007669"/>
    <property type="project" value="UniProtKB-UniRule"/>
</dbReference>
<dbReference type="GO" id="GO:0042777">
    <property type="term" value="P:proton motive force-driven plasma membrane ATP synthesis"/>
    <property type="evidence" value="ECO:0007669"/>
    <property type="project" value="UniProtKB-UniRule"/>
</dbReference>
<dbReference type="CDD" id="cd12151">
    <property type="entry name" value="F1-ATPase_gamma"/>
    <property type="match status" value="1"/>
</dbReference>
<dbReference type="FunFam" id="1.10.287.80:FF:000005">
    <property type="entry name" value="ATP synthase gamma chain"/>
    <property type="match status" value="1"/>
</dbReference>
<dbReference type="Gene3D" id="3.40.1380.10">
    <property type="match status" value="1"/>
</dbReference>
<dbReference type="Gene3D" id="1.10.287.80">
    <property type="entry name" value="ATP synthase, gamma subunit, helix hairpin domain"/>
    <property type="match status" value="2"/>
</dbReference>
<dbReference type="HAMAP" id="MF_00815">
    <property type="entry name" value="ATP_synth_gamma_bact"/>
    <property type="match status" value="1"/>
</dbReference>
<dbReference type="InterPro" id="IPR035968">
    <property type="entry name" value="ATP_synth_F1_ATPase_gsu"/>
</dbReference>
<dbReference type="InterPro" id="IPR000131">
    <property type="entry name" value="ATP_synth_F1_gsu"/>
</dbReference>
<dbReference type="InterPro" id="IPR023632">
    <property type="entry name" value="ATP_synth_F1_gsu_CS"/>
</dbReference>
<dbReference type="NCBIfam" id="TIGR01146">
    <property type="entry name" value="ATPsyn_F1gamma"/>
    <property type="match status" value="1"/>
</dbReference>
<dbReference type="PANTHER" id="PTHR11693">
    <property type="entry name" value="ATP SYNTHASE GAMMA CHAIN"/>
    <property type="match status" value="1"/>
</dbReference>
<dbReference type="PANTHER" id="PTHR11693:SF22">
    <property type="entry name" value="ATP SYNTHASE SUBUNIT GAMMA, MITOCHONDRIAL"/>
    <property type="match status" value="1"/>
</dbReference>
<dbReference type="Pfam" id="PF00231">
    <property type="entry name" value="ATP-synt"/>
    <property type="match status" value="1"/>
</dbReference>
<dbReference type="PRINTS" id="PR00126">
    <property type="entry name" value="ATPASEGAMMA"/>
</dbReference>
<dbReference type="SUPFAM" id="SSF52943">
    <property type="entry name" value="ATP synthase (F1-ATPase), gamma subunit"/>
    <property type="match status" value="1"/>
</dbReference>
<dbReference type="PROSITE" id="PS00153">
    <property type="entry name" value="ATPASE_GAMMA"/>
    <property type="match status" value="1"/>
</dbReference>
<organism>
    <name type="scientific">Buchnera aphidicola subsp. Melaphis rhois</name>
    <dbReference type="NCBI Taxonomy" id="118103"/>
    <lineage>
        <taxon>Bacteria</taxon>
        <taxon>Pseudomonadati</taxon>
        <taxon>Pseudomonadota</taxon>
        <taxon>Gammaproteobacteria</taxon>
        <taxon>Enterobacterales</taxon>
        <taxon>Erwiniaceae</taxon>
        <taxon>Buchnera</taxon>
    </lineage>
</organism>
<sequence length="289" mass="33464">MSEIKEVRNKIKCITNTQKITKAMEMVSISKMKKAEVKMNSGRPYLKTIKEIINNFISNNTRYQHVYLEQRAVKKIGIIIISTDRGLCGNLNVTLFKKILDFIQNYNNRNITSDLSILGLKGLSFFKSLSNKIVYFNDYAKNNYTFSDCLNCNSIFMKLYSIGEIDRLFLAYNKFKSTLIQIPSIIQLLPLSKKKIHCHNNHWDYIYESDSKLLLNKLLNNYLEFQIYQASLENYTSEQAARMIAMKQATDNSKDLIRELQIIYNKARQDNITQELTEIVSGAAAISLN</sequence>
<protein>
    <recommendedName>
        <fullName evidence="1">ATP synthase gamma chain</fullName>
    </recommendedName>
    <alternativeName>
        <fullName evidence="1">ATP synthase F1 sector gamma subunit</fullName>
    </alternativeName>
    <alternativeName>
        <fullName evidence="1">F-ATPase gamma subunit</fullName>
    </alternativeName>
</protein>